<name>LIPB_SYNY3</name>
<evidence type="ECO:0000255" key="1">
    <source>
        <dbReference type="HAMAP-Rule" id="MF_00013"/>
    </source>
</evidence>
<evidence type="ECO:0000255" key="2">
    <source>
        <dbReference type="PROSITE-ProRule" id="PRU01067"/>
    </source>
</evidence>
<gene>
    <name evidence="1" type="primary">lipB</name>
    <name type="ordered locus">slr0994</name>
</gene>
<protein>
    <recommendedName>
        <fullName evidence="1">Octanoyltransferase</fullName>
        <ecNumber evidence="1">2.3.1.181</ecNumber>
    </recommendedName>
    <alternativeName>
        <fullName evidence="1">Lipoate-protein ligase B</fullName>
    </alternativeName>
    <alternativeName>
        <fullName evidence="1">Lipoyl/octanoyl transferase</fullName>
    </alternativeName>
    <alternativeName>
        <fullName evidence="1">Octanoyl-[acyl-carrier-protein]-protein N-octanoyltransferase</fullName>
    </alternativeName>
</protein>
<comment type="function">
    <text evidence="1">Catalyzes the transfer of endogenously produced octanoic acid from octanoyl-acyl-carrier-protein onto the lipoyl domains of lipoate-dependent enzymes. Lipoyl-ACP can also act as a substrate although octanoyl-ACP is likely to be the physiological substrate.</text>
</comment>
<comment type="catalytic activity">
    <reaction evidence="1">
        <text>octanoyl-[ACP] + L-lysyl-[protein] = N(6)-octanoyl-L-lysyl-[protein] + holo-[ACP] + H(+)</text>
        <dbReference type="Rhea" id="RHEA:17665"/>
        <dbReference type="Rhea" id="RHEA-COMP:9636"/>
        <dbReference type="Rhea" id="RHEA-COMP:9685"/>
        <dbReference type="Rhea" id="RHEA-COMP:9752"/>
        <dbReference type="Rhea" id="RHEA-COMP:9928"/>
        <dbReference type="ChEBI" id="CHEBI:15378"/>
        <dbReference type="ChEBI" id="CHEBI:29969"/>
        <dbReference type="ChEBI" id="CHEBI:64479"/>
        <dbReference type="ChEBI" id="CHEBI:78463"/>
        <dbReference type="ChEBI" id="CHEBI:78809"/>
        <dbReference type="EC" id="2.3.1.181"/>
    </reaction>
</comment>
<comment type="pathway">
    <text evidence="1">Protein modification; protein lipoylation via endogenous pathway; protein N(6)-(lipoyl)lysine from octanoyl-[acyl-carrier-protein]: step 1/2.</text>
</comment>
<comment type="subcellular location">
    <subcellularLocation>
        <location evidence="1">Cytoplasm</location>
    </subcellularLocation>
</comment>
<comment type="miscellaneous">
    <text evidence="1">In the reaction, the free carboxyl group of octanoic acid is attached via an amide linkage to the epsilon-amino group of a specific lysine residue of lipoyl domains of lipoate-dependent enzymes.</text>
</comment>
<comment type="similarity">
    <text evidence="1">Belongs to the LipB family.</text>
</comment>
<feature type="chain" id="PRO_0000062884" description="Octanoyltransferase">
    <location>
        <begin position="1"/>
        <end position="227"/>
    </location>
</feature>
<feature type="domain" description="BPL/LPL catalytic" evidence="2">
    <location>
        <begin position="34"/>
        <end position="212"/>
    </location>
</feature>
<feature type="active site" description="Acyl-thioester intermediate" evidence="1">
    <location>
        <position position="174"/>
    </location>
</feature>
<feature type="binding site" evidence="1">
    <location>
        <begin position="76"/>
        <end position="83"/>
    </location>
    <ligand>
        <name>substrate</name>
    </ligand>
</feature>
<feature type="binding site" evidence="1">
    <location>
        <begin position="143"/>
        <end position="145"/>
    </location>
    <ligand>
        <name>substrate</name>
    </ligand>
</feature>
<feature type="binding site" evidence="1">
    <location>
        <begin position="156"/>
        <end position="158"/>
    </location>
    <ligand>
        <name>substrate</name>
    </ligand>
</feature>
<feature type="site" description="Lowers pKa of active site Cys" evidence="1">
    <location>
        <position position="140"/>
    </location>
</feature>
<proteinExistence type="inferred from homology"/>
<dbReference type="EC" id="2.3.1.181" evidence="1"/>
<dbReference type="EMBL" id="BA000022">
    <property type="protein sequence ID" value="BAA18623.1"/>
    <property type="molecule type" value="Genomic_DNA"/>
</dbReference>
<dbReference type="PIR" id="S76494">
    <property type="entry name" value="S76494"/>
</dbReference>
<dbReference type="SMR" id="P74519"/>
<dbReference type="IntAct" id="P74519">
    <property type="interactions" value="9"/>
</dbReference>
<dbReference type="STRING" id="1148.gene:10499506"/>
<dbReference type="PaxDb" id="1148-1653711"/>
<dbReference type="EnsemblBacteria" id="BAA18623">
    <property type="protein sequence ID" value="BAA18623"/>
    <property type="gene ID" value="BAA18623"/>
</dbReference>
<dbReference type="KEGG" id="syn:slr0994"/>
<dbReference type="eggNOG" id="COG0321">
    <property type="taxonomic scope" value="Bacteria"/>
</dbReference>
<dbReference type="InParanoid" id="P74519"/>
<dbReference type="PhylomeDB" id="P74519"/>
<dbReference type="UniPathway" id="UPA00538">
    <property type="reaction ID" value="UER00592"/>
</dbReference>
<dbReference type="Proteomes" id="UP000001425">
    <property type="component" value="Chromosome"/>
</dbReference>
<dbReference type="GO" id="GO:0005737">
    <property type="term" value="C:cytoplasm"/>
    <property type="evidence" value="ECO:0007669"/>
    <property type="project" value="UniProtKB-SubCell"/>
</dbReference>
<dbReference type="GO" id="GO:0033819">
    <property type="term" value="F:lipoyl(octanoyl) transferase activity"/>
    <property type="evidence" value="ECO:0000318"/>
    <property type="project" value="GO_Central"/>
</dbReference>
<dbReference type="GO" id="GO:0036211">
    <property type="term" value="P:protein modification process"/>
    <property type="evidence" value="ECO:0007669"/>
    <property type="project" value="InterPro"/>
</dbReference>
<dbReference type="CDD" id="cd16444">
    <property type="entry name" value="LipB"/>
    <property type="match status" value="1"/>
</dbReference>
<dbReference type="FunFam" id="3.30.930.10:FF:000035">
    <property type="entry name" value="Putative lipoyltransferase 2, mitochondrial"/>
    <property type="match status" value="1"/>
</dbReference>
<dbReference type="Gene3D" id="3.30.930.10">
    <property type="entry name" value="Bira Bifunctional Protein, Domain 2"/>
    <property type="match status" value="1"/>
</dbReference>
<dbReference type="HAMAP" id="MF_00013">
    <property type="entry name" value="LipB"/>
    <property type="match status" value="1"/>
</dbReference>
<dbReference type="InterPro" id="IPR045864">
    <property type="entry name" value="aa-tRNA-synth_II/BPL/LPL"/>
</dbReference>
<dbReference type="InterPro" id="IPR004143">
    <property type="entry name" value="BPL_LPL_catalytic"/>
</dbReference>
<dbReference type="InterPro" id="IPR000544">
    <property type="entry name" value="Octanoyltransferase"/>
</dbReference>
<dbReference type="InterPro" id="IPR020605">
    <property type="entry name" value="Octanoyltransferase_CS"/>
</dbReference>
<dbReference type="NCBIfam" id="TIGR00214">
    <property type="entry name" value="lipB"/>
    <property type="match status" value="1"/>
</dbReference>
<dbReference type="NCBIfam" id="NF010925">
    <property type="entry name" value="PRK14345.1"/>
    <property type="match status" value="1"/>
</dbReference>
<dbReference type="PANTHER" id="PTHR10993:SF7">
    <property type="entry name" value="LIPOYLTRANSFERASE 2, MITOCHONDRIAL-RELATED"/>
    <property type="match status" value="1"/>
</dbReference>
<dbReference type="PANTHER" id="PTHR10993">
    <property type="entry name" value="OCTANOYLTRANSFERASE"/>
    <property type="match status" value="1"/>
</dbReference>
<dbReference type="Pfam" id="PF21948">
    <property type="entry name" value="LplA-B_cat"/>
    <property type="match status" value="1"/>
</dbReference>
<dbReference type="SUPFAM" id="SSF55681">
    <property type="entry name" value="Class II aaRS and biotin synthetases"/>
    <property type="match status" value="1"/>
</dbReference>
<dbReference type="PROSITE" id="PS51733">
    <property type="entry name" value="BPL_LPL_CATALYTIC"/>
    <property type="match status" value="1"/>
</dbReference>
<dbReference type="PROSITE" id="PS01313">
    <property type="entry name" value="LIPB"/>
    <property type="match status" value="1"/>
</dbReference>
<organism>
    <name type="scientific">Synechocystis sp. (strain ATCC 27184 / PCC 6803 / Kazusa)</name>
    <dbReference type="NCBI Taxonomy" id="1111708"/>
    <lineage>
        <taxon>Bacteria</taxon>
        <taxon>Bacillati</taxon>
        <taxon>Cyanobacteriota</taxon>
        <taxon>Cyanophyceae</taxon>
        <taxon>Synechococcales</taxon>
        <taxon>Merismopediaceae</taxon>
        <taxon>Synechocystis</taxon>
    </lineage>
</organism>
<sequence length="227" mass="25641">MANPSCRLLSFGLVPYCQAWQYQRRWVRAKQRDRQREDGLMLLEHPPVYTLGTGSQTKYLKFDPAYPPAELWRTERGGEVTYHCPGQLVGYPILDLNHFQKDLHWYLRQLEEVLIITLEKLDLQGERIAGLTGVWLEGHKVAAIAIKVSGWVTCHGFALNICPDLEGFSHIVPCGIGDRPVGSLNQFLPGLTVEIVQPLVIQAFAEVFPVTWIATGEMPCWLSDDVA</sequence>
<keyword id="KW-0012">Acyltransferase</keyword>
<keyword id="KW-0963">Cytoplasm</keyword>
<keyword id="KW-1185">Reference proteome</keyword>
<keyword id="KW-0808">Transferase</keyword>
<reference key="1">
    <citation type="journal article" date="1996" name="DNA Res.">
        <title>Sequence analysis of the genome of the unicellular cyanobacterium Synechocystis sp. strain PCC6803. II. Sequence determination of the entire genome and assignment of potential protein-coding regions.</title>
        <authorList>
            <person name="Kaneko T."/>
            <person name="Sato S."/>
            <person name="Kotani H."/>
            <person name="Tanaka A."/>
            <person name="Asamizu E."/>
            <person name="Nakamura Y."/>
            <person name="Miyajima N."/>
            <person name="Hirosawa M."/>
            <person name="Sugiura M."/>
            <person name="Sasamoto S."/>
            <person name="Kimura T."/>
            <person name="Hosouchi T."/>
            <person name="Matsuno A."/>
            <person name="Muraki A."/>
            <person name="Nakazaki N."/>
            <person name="Naruo K."/>
            <person name="Okumura S."/>
            <person name="Shimpo S."/>
            <person name="Takeuchi C."/>
            <person name="Wada T."/>
            <person name="Watanabe A."/>
            <person name="Yamada M."/>
            <person name="Yasuda M."/>
            <person name="Tabata S."/>
        </authorList>
    </citation>
    <scope>NUCLEOTIDE SEQUENCE [LARGE SCALE GENOMIC DNA]</scope>
    <source>
        <strain>ATCC 27184 / PCC 6803 / Kazusa</strain>
    </source>
</reference>
<accession>P74519</accession>